<proteinExistence type="inferred from homology"/>
<name>VPS37_DICDI</name>
<accession>Q55DV8</accession>
<protein>
    <recommendedName>
        <fullName>Vacuolar protein sorting-associated protein 37</fullName>
    </recommendedName>
    <alternativeName>
        <fullName>ESCRT-I complex subunit VPS37</fullName>
    </alternativeName>
</protein>
<gene>
    <name type="primary">vps37</name>
    <name type="ORF">DDB_G0269510</name>
</gene>
<dbReference type="EMBL" id="AAFI02000005">
    <property type="protein sequence ID" value="EAL72105.1"/>
    <property type="molecule type" value="Genomic_DNA"/>
</dbReference>
<dbReference type="RefSeq" id="XP_646023.1">
    <property type="nucleotide sequence ID" value="XM_640931.1"/>
</dbReference>
<dbReference type="SMR" id="Q55DV8"/>
<dbReference type="FunCoup" id="Q55DV8">
    <property type="interactions" value="79"/>
</dbReference>
<dbReference type="STRING" id="44689.Q55DV8"/>
<dbReference type="PaxDb" id="44689-DDB0234024"/>
<dbReference type="EnsemblProtists" id="EAL72105">
    <property type="protein sequence ID" value="EAL72105"/>
    <property type="gene ID" value="DDB_G0269510"/>
</dbReference>
<dbReference type="GeneID" id="8616971"/>
<dbReference type="KEGG" id="ddi:DDB_G0269510"/>
<dbReference type="dictyBase" id="DDB_G0269510">
    <property type="gene designation" value="vps37"/>
</dbReference>
<dbReference type="VEuPathDB" id="AmoebaDB:DDB_G0269510"/>
<dbReference type="eggNOG" id="KOG3270">
    <property type="taxonomic scope" value="Eukaryota"/>
</dbReference>
<dbReference type="HOGENOM" id="CLU_835280_0_0_1"/>
<dbReference type="InParanoid" id="Q55DV8"/>
<dbReference type="OMA" id="HPWCNEH"/>
<dbReference type="Reactome" id="R-DDI-917729">
    <property type="pathway name" value="Endosomal Sorting Complex Required For Transport (ESCRT)"/>
</dbReference>
<dbReference type="PRO" id="PR:Q55DV8"/>
<dbReference type="Proteomes" id="UP000002195">
    <property type="component" value="Chromosome 1"/>
</dbReference>
<dbReference type="GO" id="GO:0000813">
    <property type="term" value="C:ESCRT I complex"/>
    <property type="evidence" value="ECO:0000250"/>
    <property type="project" value="dictyBase"/>
</dbReference>
<dbReference type="GO" id="GO:0031902">
    <property type="term" value="C:late endosome membrane"/>
    <property type="evidence" value="ECO:0007669"/>
    <property type="project" value="UniProtKB-SubCell"/>
</dbReference>
<dbReference type="GO" id="GO:0006612">
    <property type="term" value="P:protein targeting to membrane"/>
    <property type="evidence" value="ECO:0000318"/>
    <property type="project" value="GO_Central"/>
</dbReference>
<dbReference type="GO" id="GO:0006623">
    <property type="term" value="P:protein targeting to vacuole"/>
    <property type="evidence" value="ECO:0000318"/>
    <property type="project" value="GO_Central"/>
</dbReference>
<dbReference type="GO" id="GO:0043162">
    <property type="term" value="P:ubiquitin-dependent protein catabolic process via the multivesicular body sorting pathway"/>
    <property type="evidence" value="ECO:0000318"/>
    <property type="project" value="GO_Central"/>
</dbReference>
<dbReference type="Gene3D" id="1.10.287.660">
    <property type="entry name" value="Helix hairpin bin"/>
    <property type="match status" value="1"/>
</dbReference>
<dbReference type="InterPro" id="IPR037202">
    <property type="entry name" value="ESCRT_assembly_dom"/>
</dbReference>
<dbReference type="InterPro" id="IPR029012">
    <property type="entry name" value="Helix_hairpin_bin_sf"/>
</dbReference>
<dbReference type="InterPro" id="IPR009851">
    <property type="entry name" value="Mod_r"/>
</dbReference>
<dbReference type="PANTHER" id="PTHR13678">
    <property type="entry name" value="VACUOLAR PROTEIN SORTING-ASSOCIATED PROTEIN 37"/>
    <property type="match status" value="1"/>
</dbReference>
<dbReference type="PANTHER" id="PTHR13678:SF2">
    <property type="entry name" value="VACUOLAR PROTEIN SORTING-ASSOCIATED PROTEIN 37A"/>
    <property type="match status" value="1"/>
</dbReference>
<dbReference type="Pfam" id="PF07200">
    <property type="entry name" value="Mod_r"/>
    <property type="match status" value="1"/>
</dbReference>
<dbReference type="SUPFAM" id="SSF140111">
    <property type="entry name" value="Endosomal sorting complex assembly domain"/>
    <property type="match status" value="1"/>
</dbReference>
<dbReference type="PROSITE" id="PS51314">
    <property type="entry name" value="VPS37_C"/>
    <property type="match status" value="1"/>
</dbReference>
<comment type="function">
    <text evidence="1">Component of the ESCRT-I complex, a regulator of vesicular trafficking process.</text>
</comment>
<comment type="subunit">
    <text evidence="1">Component of the ESCRT-I complex (endosomal sorting complex required for transport I).</text>
</comment>
<comment type="subcellular location">
    <subcellularLocation>
        <location evidence="1">Cytoplasm</location>
    </subcellularLocation>
    <subcellularLocation>
        <location evidence="1">Endosome</location>
    </subcellularLocation>
    <subcellularLocation>
        <location evidence="1">Late endosome membrane</location>
        <topology evidence="1">Peripheral membrane protein</topology>
    </subcellularLocation>
</comment>
<comment type="similarity">
    <text evidence="4">Belongs to the VPS37 family.</text>
</comment>
<sequence>MSKPDLNSLSIKMKQINLLKERFSHTIEVVKDSTFKIPFLNVHLLISLPVNFPNSPPAYFLEILQTHQPVSLPPNYQWTQISNLASVTVHIMEPFIKDSRILETLIEQVKRSQAMQQQQQQQQQQQRNQQAQQQYSPPPPYKDQPINKQPAQQQPQPVQQKPQQQQNGTNKIPMIPTEFPELKSKSVEELEELLKNEDSLNAFIYSYDEVSELSNRKSKLLSENERLTKITDPLPNDINDLSANLMTSKQKLEELKRKQEQLQQKKNSIADKYSQQNLLEILNDSISDLESESDNIVHSFLEGNLELKEFKKQFKEKRSSYHSKCANKDLFFK</sequence>
<feature type="chain" id="PRO_0000367436" description="Vacuolar protein sorting-associated protein 37">
    <location>
        <begin position="1"/>
        <end position="333"/>
    </location>
</feature>
<feature type="domain" description="VPS37 C-terminal" evidence="2">
    <location>
        <begin position="256"/>
        <end position="333"/>
    </location>
</feature>
<feature type="region of interest" description="Disordered" evidence="3">
    <location>
        <begin position="116"/>
        <end position="176"/>
    </location>
</feature>
<feature type="compositionally biased region" description="Low complexity" evidence="3">
    <location>
        <begin position="116"/>
        <end position="134"/>
    </location>
</feature>
<feature type="compositionally biased region" description="Low complexity" evidence="3">
    <location>
        <begin position="144"/>
        <end position="166"/>
    </location>
</feature>
<organism>
    <name type="scientific">Dictyostelium discoideum</name>
    <name type="common">Social amoeba</name>
    <dbReference type="NCBI Taxonomy" id="44689"/>
    <lineage>
        <taxon>Eukaryota</taxon>
        <taxon>Amoebozoa</taxon>
        <taxon>Evosea</taxon>
        <taxon>Eumycetozoa</taxon>
        <taxon>Dictyostelia</taxon>
        <taxon>Dictyosteliales</taxon>
        <taxon>Dictyosteliaceae</taxon>
        <taxon>Dictyostelium</taxon>
    </lineage>
</organism>
<reference key="1">
    <citation type="journal article" date="2005" name="Nature">
        <title>The genome of the social amoeba Dictyostelium discoideum.</title>
        <authorList>
            <person name="Eichinger L."/>
            <person name="Pachebat J.A."/>
            <person name="Gloeckner G."/>
            <person name="Rajandream M.A."/>
            <person name="Sucgang R."/>
            <person name="Berriman M."/>
            <person name="Song J."/>
            <person name="Olsen R."/>
            <person name="Szafranski K."/>
            <person name="Xu Q."/>
            <person name="Tunggal B."/>
            <person name="Kummerfeld S."/>
            <person name="Madera M."/>
            <person name="Konfortov B.A."/>
            <person name="Rivero F."/>
            <person name="Bankier A.T."/>
            <person name="Lehmann R."/>
            <person name="Hamlin N."/>
            <person name="Davies R."/>
            <person name="Gaudet P."/>
            <person name="Fey P."/>
            <person name="Pilcher K."/>
            <person name="Chen G."/>
            <person name="Saunders D."/>
            <person name="Sodergren E.J."/>
            <person name="Davis P."/>
            <person name="Kerhornou A."/>
            <person name="Nie X."/>
            <person name="Hall N."/>
            <person name="Anjard C."/>
            <person name="Hemphill L."/>
            <person name="Bason N."/>
            <person name="Farbrother P."/>
            <person name="Desany B."/>
            <person name="Just E."/>
            <person name="Morio T."/>
            <person name="Rost R."/>
            <person name="Churcher C.M."/>
            <person name="Cooper J."/>
            <person name="Haydock S."/>
            <person name="van Driessche N."/>
            <person name="Cronin A."/>
            <person name="Goodhead I."/>
            <person name="Muzny D.M."/>
            <person name="Mourier T."/>
            <person name="Pain A."/>
            <person name="Lu M."/>
            <person name="Harper D."/>
            <person name="Lindsay R."/>
            <person name="Hauser H."/>
            <person name="James K.D."/>
            <person name="Quiles M."/>
            <person name="Madan Babu M."/>
            <person name="Saito T."/>
            <person name="Buchrieser C."/>
            <person name="Wardroper A."/>
            <person name="Felder M."/>
            <person name="Thangavelu M."/>
            <person name="Johnson D."/>
            <person name="Knights A."/>
            <person name="Loulseged H."/>
            <person name="Mungall K.L."/>
            <person name="Oliver K."/>
            <person name="Price C."/>
            <person name="Quail M.A."/>
            <person name="Urushihara H."/>
            <person name="Hernandez J."/>
            <person name="Rabbinowitsch E."/>
            <person name="Steffen D."/>
            <person name="Sanders M."/>
            <person name="Ma J."/>
            <person name="Kohara Y."/>
            <person name="Sharp S."/>
            <person name="Simmonds M.N."/>
            <person name="Spiegler S."/>
            <person name="Tivey A."/>
            <person name="Sugano S."/>
            <person name="White B."/>
            <person name="Walker D."/>
            <person name="Woodward J.R."/>
            <person name="Winckler T."/>
            <person name="Tanaka Y."/>
            <person name="Shaulsky G."/>
            <person name="Schleicher M."/>
            <person name="Weinstock G.M."/>
            <person name="Rosenthal A."/>
            <person name="Cox E.C."/>
            <person name="Chisholm R.L."/>
            <person name="Gibbs R.A."/>
            <person name="Loomis W.F."/>
            <person name="Platzer M."/>
            <person name="Kay R.R."/>
            <person name="Williams J.G."/>
            <person name="Dear P.H."/>
            <person name="Noegel A.A."/>
            <person name="Barrell B.G."/>
            <person name="Kuspa A."/>
        </authorList>
    </citation>
    <scope>NUCLEOTIDE SEQUENCE [LARGE SCALE GENOMIC DNA]</scope>
    <source>
        <strain>AX4</strain>
    </source>
</reference>
<evidence type="ECO:0000250" key="1"/>
<evidence type="ECO:0000255" key="2">
    <source>
        <dbReference type="PROSITE-ProRule" id="PRU00646"/>
    </source>
</evidence>
<evidence type="ECO:0000256" key="3">
    <source>
        <dbReference type="SAM" id="MobiDB-lite"/>
    </source>
</evidence>
<evidence type="ECO:0000305" key="4"/>
<keyword id="KW-0963">Cytoplasm</keyword>
<keyword id="KW-0967">Endosome</keyword>
<keyword id="KW-0472">Membrane</keyword>
<keyword id="KW-0653">Protein transport</keyword>
<keyword id="KW-1185">Reference proteome</keyword>
<keyword id="KW-0813">Transport</keyword>